<protein>
    <recommendedName>
        <fullName evidence="1">Beta-ketoacyl-[acyl-carrier-protein] synthase III</fullName>
        <shortName evidence="1">Beta-ketoacyl-ACP synthase III</shortName>
        <shortName evidence="1">KAS III</shortName>
        <ecNumber evidence="1">2.3.1.180</ecNumber>
    </recommendedName>
    <alternativeName>
        <fullName evidence="1">3-oxoacyl-[acyl-carrier-protein] synthase 3</fullName>
    </alternativeName>
    <alternativeName>
        <fullName evidence="1">3-oxoacyl-[acyl-carrier-protein] synthase III</fullName>
    </alternativeName>
</protein>
<evidence type="ECO:0000255" key="1">
    <source>
        <dbReference type="HAMAP-Rule" id="MF_01815"/>
    </source>
</evidence>
<keyword id="KW-0012">Acyltransferase</keyword>
<keyword id="KW-0963">Cytoplasm</keyword>
<keyword id="KW-0275">Fatty acid biosynthesis</keyword>
<keyword id="KW-0276">Fatty acid metabolism</keyword>
<keyword id="KW-0444">Lipid biosynthesis</keyword>
<keyword id="KW-0443">Lipid metabolism</keyword>
<keyword id="KW-0511">Multifunctional enzyme</keyword>
<keyword id="KW-0808">Transferase</keyword>
<gene>
    <name evidence="1" type="primary">fabH</name>
    <name type="ordered locus">CbuK_1367</name>
</gene>
<feature type="chain" id="PRO_1000187859" description="Beta-ketoacyl-[acyl-carrier-protein] synthase III">
    <location>
        <begin position="1"/>
        <end position="319"/>
    </location>
</feature>
<feature type="region of interest" description="ACP-binding" evidence="1">
    <location>
        <begin position="247"/>
        <end position="251"/>
    </location>
</feature>
<feature type="active site" evidence="1">
    <location>
        <position position="115"/>
    </location>
</feature>
<feature type="active site" evidence="1">
    <location>
        <position position="246"/>
    </location>
</feature>
<feature type="active site" evidence="1">
    <location>
        <position position="276"/>
    </location>
</feature>
<dbReference type="EC" id="2.3.1.180" evidence="1"/>
<dbReference type="EMBL" id="CP001020">
    <property type="protein sequence ID" value="ACJ20544.1"/>
    <property type="molecule type" value="Genomic_DNA"/>
</dbReference>
<dbReference type="RefSeq" id="WP_005771272.1">
    <property type="nucleotide sequence ID" value="NC_011528.1"/>
</dbReference>
<dbReference type="SMR" id="B6J8E5"/>
<dbReference type="KEGG" id="cbc:CbuK_1367"/>
<dbReference type="HOGENOM" id="CLU_039592_4_1_6"/>
<dbReference type="UniPathway" id="UPA00094"/>
<dbReference type="GO" id="GO:0005737">
    <property type="term" value="C:cytoplasm"/>
    <property type="evidence" value="ECO:0007669"/>
    <property type="project" value="UniProtKB-SubCell"/>
</dbReference>
<dbReference type="GO" id="GO:0004315">
    <property type="term" value="F:3-oxoacyl-[acyl-carrier-protein] synthase activity"/>
    <property type="evidence" value="ECO:0007669"/>
    <property type="project" value="InterPro"/>
</dbReference>
<dbReference type="GO" id="GO:0033818">
    <property type="term" value="F:beta-ketoacyl-acyl-carrier-protein synthase III activity"/>
    <property type="evidence" value="ECO:0007669"/>
    <property type="project" value="UniProtKB-UniRule"/>
</dbReference>
<dbReference type="GO" id="GO:0006633">
    <property type="term" value="P:fatty acid biosynthetic process"/>
    <property type="evidence" value="ECO:0007669"/>
    <property type="project" value="UniProtKB-UniRule"/>
</dbReference>
<dbReference type="CDD" id="cd00830">
    <property type="entry name" value="KAS_III"/>
    <property type="match status" value="1"/>
</dbReference>
<dbReference type="FunFam" id="3.40.47.10:FF:000004">
    <property type="entry name" value="3-oxoacyl-[acyl-carrier-protein] synthase 3"/>
    <property type="match status" value="1"/>
</dbReference>
<dbReference type="Gene3D" id="3.40.47.10">
    <property type="match status" value="1"/>
</dbReference>
<dbReference type="HAMAP" id="MF_01815">
    <property type="entry name" value="FabH"/>
    <property type="match status" value="1"/>
</dbReference>
<dbReference type="InterPro" id="IPR013747">
    <property type="entry name" value="ACP_syn_III_C"/>
</dbReference>
<dbReference type="InterPro" id="IPR013751">
    <property type="entry name" value="ACP_syn_III_N"/>
</dbReference>
<dbReference type="InterPro" id="IPR004655">
    <property type="entry name" value="FabH"/>
</dbReference>
<dbReference type="InterPro" id="IPR016039">
    <property type="entry name" value="Thiolase-like"/>
</dbReference>
<dbReference type="NCBIfam" id="TIGR00747">
    <property type="entry name" value="fabH"/>
    <property type="match status" value="1"/>
</dbReference>
<dbReference type="NCBIfam" id="NF006829">
    <property type="entry name" value="PRK09352.1"/>
    <property type="match status" value="1"/>
</dbReference>
<dbReference type="PANTHER" id="PTHR43091">
    <property type="entry name" value="3-OXOACYL-[ACYL-CARRIER-PROTEIN] SYNTHASE"/>
    <property type="match status" value="1"/>
</dbReference>
<dbReference type="PANTHER" id="PTHR43091:SF1">
    <property type="entry name" value="BETA-KETOACYL-[ACYL-CARRIER-PROTEIN] SYNTHASE III, CHLOROPLASTIC"/>
    <property type="match status" value="1"/>
</dbReference>
<dbReference type="Pfam" id="PF08545">
    <property type="entry name" value="ACP_syn_III"/>
    <property type="match status" value="1"/>
</dbReference>
<dbReference type="Pfam" id="PF08541">
    <property type="entry name" value="ACP_syn_III_C"/>
    <property type="match status" value="1"/>
</dbReference>
<dbReference type="SUPFAM" id="SSF53901">
    <property type="entry name" value="Thiolase-like"/>
    <property type="match status" value="1"/>
</dbReference>
<accession>B6J8E5</accession>
<name>FABH_COXB1</name>
<sequence length="319" mass="34663">MTYARIQGVGSYIPQQILSNADLEKMVNTTDEWIMQRVGVRERHVIANSPDNTTTMAVDAAKRAIEMAGIDSAVIDMIIVGTATAEYYFPSTACLVQKHLNLREDIPAFDINAACAGFVYALSIADQYIRNGGAKHILVIGVDSLTKVVDWKDRSTCILFGDGAGAVILQAHKEPGILNTILHANGDYSDLITAKSGVWERESVPHLHMYGKEVFKLAVTKLGEIVDEIIEKSGLKQSDIDWLIPHQANLRIIEATAKRLGLPRERVILTIEQHGNTSAASIPLALDAAVRAGKIKRGDTLLLEAFGAGLAWGAALLKL</sequence>
<organism>
    <name type="scientific">Coxiella burnetii (strain CbuK_Q154)</name>
    <name type="common">Coxiella burnetii (strain Q154)</name>
    <dbReference type="NCBI Taxonomy" id="434924"/>
    <lineage>
        <taxon>Bacteria</taxon>
        <taxon>Pseudomonadati</taxon>
        <taxon>Pseudomonadota</taxon>
        <taxon>Gammaproteobacteria</taxon>
        <taxon>Legionellales</taxon>
        <taxon>Coxiellaceae</taxon>
        <taxon>Coxiella</taxon>
    </lineage>
</organism>
<reference key="1">
    <citation type="journal article" date="2009" name="Infect. Immun.">
        <title>Comparative genomics reveal extensive transposon-mediated genomic plasticity and diversity among potential effector proteins within the genus Coxiella.</title>
        <authorList>
            <person name="Beare P.A."/>
            <person name="Unsworth N."/>
            <person name="Andoh M."/>
            <person name="Voth D.E."/>
            <person name="Omsland A."/>
            <person name="Gilk S.D."/>
            <person name="Williams K.P."/>
            <person name="Sobral B.W."/>
            <person name="Kupko J.J. III"/>
            <person name="Porcella S.F."/>
            <person name="Samuel J.E."/>
            <person name="Heinzen R.A."/>
        </authorList>
    </citation>
    <scope>NUCLEOTIDE SEQUENCE [LARGE SCALE GENOMIC DNA]</scope>
    <source>
        <strain>CbuK_Q154</strain>
    </source>
</reference>
<proteinExistence type="inferred from homology"/>
<comment type="function">
    <text evidence="1">Catalyzes the condensation reaction of fatty acid synthesis by the addition to an acyl acceptor of two carbons from malonyl-ACP. Catalyzes the first condensation reaction which initiates fatty acid synthesis and may therefore play a role in governing the total rate of fatty acid production. Possesses both acetoacetyl-ACP synthase and acetyl transacylase activities. Its substrate specificity determines the biosynthesis of branched-chain and/or straight-chain of fatty acids.</text>
</comment>
<comment type="catalytic activity">
    <reaction evidence="1">
        <text>malonyl-[ACP] + acetyl-CoA + H(+) = 3-oxobutanoyl-[ACP] + CO2 + CoA</text>
        <dbReference type="Rhea" id="RHEA:12080"/>
        <dbReference type="Rhea" id="RHEA-COMP:9623"/>
        <dbReference type="Rhea" id="RHEA-COMP:9625"/>
        <dbReference type="ChEBI" id="CHEBI:15378"/>
        <dbReference type="ChEBI" id="CHEBI:16526"/>
        <dbReference type="ChEBI" id="CHEBI:57287"/>
        <dbReference type="ChEBI" id="CHEBI:57288"/>
        <dbReference type="ChEBI" id="CHEBI:78449"/>
        <dbReference type="ChEBI" id="CHEBI:78450"/>
        <dbReference type="EC" id="2.3.1.180"/>
    </reaction>
</comment>
<comment type="pathway">
    <text evidence="1">Lipid metabolism; fatty acid biosynthesis.</text>
</comment>
<comment type="subunit">
    <text evidence="1">Homodimer.</text>
</comment>
<comment type="subcellular location">
    <subcellularLocation>
        <location evidence="1">Cytoplasm</location>
    </subcellularLocation>
</comment>
<comment type="domain">
    <text evidence="1">The last Arg residue of the ACP-binding site is essential for the weak association between ACP/AcpP and FabH.</text>
</comment>
<comment type="similarity">
    <text evidence="1">Belongs to the thiolase-like superfamily. FabH family.</text>
</comment>